<comment type="function">
    <text evidence="1">Plays an important role in the de novo pathway of purine nucleotide biosynthesis. Catalyzes the first committed step in the biosynthesis of AMP from IMP.</text>
</comment>
<comment type="catalytic activity">
    <reaction evidence="1">
        <text>IMP + L-aspartate + GTP = N(6)-(1,2-dicarboxyethyl)-AMP + GDP + phosphate + 2 H(+)</text>
        <dbReference type="Rhea" id="RHEA:15753"/>
        <dbReference type="ChEBI" id="CHEBI:15378"/>
        <dbReference type="ChEBI" id="CHEBI:29991"/>
        <dbReference type="ChEBI" id="CHEBI:37565"/>
        <dbReference type="ChEBI" id="CHEBI:43474"/>
        <dbReference type="ChEBI" id="CHEBI:57567"/>
        <dbReference type="ChEBI" id="CHEBI:58053"/>
        <dbReference type="ChEBI" id="CHEBI:58189"/>
        <dbReference type="EC" id="6.3.4.4"/>
    </reaction>
</comment>
<comment type="cofactor">
    <cofactor evidence="1">
        <name>Mg(2+)</name>
        <dbReference type="ChEBI" id="CHEBI:18420"/>
    </cofactor>
    <text evidence="1">Binds 1 Mg(2+) ion per subunit.</text>
</comment>
<comment type="pathway">
    <text evidence="1">Purine metabolism; AMP biosynthesis via de novo pathway; AMP from IMP: step 1/2.</text>
</comment>
<comment type="subunit">
    <text evidence="1">Homodimer.</text>
</comment>
<comment type="subcellular location">
    <subcellularLocation>
        <location evidence="1">Cytoplasm</location>
    </subcellularLocation>
</comment>
<comment type="similarity">
    <text evidence="1">Belongs to the adenylosuccinate synthetase family.</text>
</comment>
<evidence type="ECO:0000255" key="1">
    <source>
        <dbReference type="HAMAP-Rule" id="MF_00011"/>
    </source>
</evidence>
<protein>
    <recommendedName>
        <fullName evidence="1">Adenylosuccinate synthetase</fullName>
        <shortName evidence="1">AMPSase</shortName>
        <shortName evidence="1">AdSS</shortName>
        <ecNumber evidence="1">6.3.4.4</ecNumber>
    </recommendedName>
    <alternativeName>
        <fullName evidence="1">IMP--aspartate ligase</fullName>
    </alternativeName>
</protein>
<keyword id="KW-0963">Cytoplasm</keyword>
<keyword id="KW-0342">GTP-binding</keyword>
<keyword id="KW-0436">Ligase</keyword>
<keyword id="KW-0460">Magnesium</keyword>
<keyword id="KW-0479">Metal-binding</keyword>
<keyword id="KW-0547">Nucleotide-binding</keyword>
<keyword id="KW-0658">Purine biosynthesis</keyword>
<dbReference type="EC" id="6.3.4.4" evidence="1"/>
<dbReference type="EMBL" id="CP001131">
    <property type="protein sequence ID" value="ACG73823.1"/>
    <property type="molecule type" value="Genomic_DNA"/>
</dbReference>
<dbReference type="RefSeq" id="WP_012526605.1">
    <property type="nucleotide sequence ID" value="NC_011145.1"/>
</dbReference>
<dbReference type="SMR" id="B4UGW9"/>
<dbReference type="KEGG" id="ank:AnaeK_2598"/>
<dbReference type="HOGENOM" id="CLU_029848_0_0_7"/>
<dbReference type="OrthoDB" id="9807553at2"/>
<dbReference type="UniPathway" id="UPA00075">
    <property type="reaction ID" value="UER00335"/>
</dbReference>
<dbReference type="Proteomes" id="UP000001871">
    <property type="component" value="Chromosome"/>
</dbReference>
<dbReference type="GO" id="GO:0005737">
    <property type="term" value="C:cytoplasm"/>
    <property type="evidence" value="ECO:0007669"/>
    <property type="project" value="UniProtKB-SubCell"/>
</dbReference>
<dbReference type="GO" id="GO:0004019">
    <property type="term" value="F:adenylosuccinate synthase activity"/>
    <property type="evidence" value="ECO:0007669"/>
    <property type="project" value="UniProtKB-UniRule"/>
</dbReference>
<dbReference type="GO" id="GO:0005525">
    <property type="term" value="F:GTP binding"/>
    <property type="evidence" value="ECO:0007669"/>
    <property type="project" value="UniProtKB-UniRule"/>
</dbReference>
<dbReference type="GO" id="GO:0000287">
    <property type="term" value="F:magnesium ion binding"/>
    <property type="evidence" value="ECO:0007669"/>
    <property type="project" value="UniProtKB-UniRule"/>
</dbReference>
<dbReference type="GO" id="GO:0044208">
    <property type="term" value="P:'de novo' AMP biosynthetic process"/>
    <property type="evidence" value="ECO:0007669"/>
    <property type="project" value="UniProtKB-UniRule"/>
</dbReference>
<dbReference type="GO" id="GO:0046040">
    <property type="term" value="P:IMP metabolic process"/>
    <property type="evidence" value="ECO:0007669"/>
    <property type="project" value="TreeGrafter"/>
</dbReference>
<dbReference type="CDD" id="cd03108">
    <property type="entry name" value="AdSS"/>
    <property type="match status" value="1"/>
</dbReference>
<dbReference type="FunFam" id="1.10.300.10:FF:000001">
    <property type="entry name" value="Adenylosuccinate synthetase"/>
    <property type="match status" value="1"/>
</dbReference>
<dbReference type="FunFam" id="3.90.170.10:FF:000001">
    <property type="entry name" value="Adenylosuccinate synthetase"/>
    <property type="match status" value="1"/>
</dbReference>
<dbReference type="Gene3D" id="3.40.440.10">
    <property type="entry name" value="Adenylosuccinate Synthetase, subunit A, domain 1"/>
    <property type="match status" value="1"/>
</dbReference>
<dbReference type="Gene3D" id="1.10.300.10">
    <property type="entry name" value="Adenylosuccinate Synthetase, subunit A, domain 2"/>
    <property type="match status" value="1"/>
</dbReference>
<dbReference type="Gene3D" id="3.90.170.10">
    <property type="entry name" value="Adenylosuccinate Synthetase, subunit A, domain 3"/>
    <property type="match status" value="1"/>
</dbReference>
<dbReference type="HAMAP" id="MF_00011">
    <property type="entry name" value="Adenylosucc_synth"/>
    <property type="match status" value="1"/>
</dbReference>
<dbReference type="InterPro" id="IPR018220">
    <property type="entry name" value="Adenylosuccin_syn_GTP-bd"/>
</dbReference>
<dbReference type="InterPro" id="IPR033128">
    <property type="entry name" value="Adenylosuccin_syn_Lys_AS"/>
</dbReference>
<dbReference type="InterPro" id="IPR042109">
    <property type="entry name" value="Adenylosuccinate_synth_dom1"/>
</dbReference>
<dbReference type="InterPro" id="IPR042110">
    <property type="entry name" value="Adenylosuccinate_synth_dom2"/>
</dbReference>
<dbReference type="InterPro" id="IPR042111">
    <property type="entry name" value="Adenylosuccinate_synth_dom3"/>
</dbReference>
<dbReference type="InterPro" id="IPR001114">
    <property type="entry name" value="Adenylosuccinate_synthetase"/>
</dbReference>
<dbReference type="InterPro" id="IPR027417">
    <property type="entry name" value="P-loop_NTPase"/>
</dbReference>
<dbReference type="NCBIfam" id="NF002223">
    <property type="entry name" value="PRK01117.1"/>
    <property type="match status" value="1"/>
</dbReference>
<dbReference type="NCBIfam" id="TIGR00184">
    <property type="entry name" value="purA"/>
    <property type="match status" value="1"/>
</dbReference>
<dbReference type="PANTHER" id="PTHR11846">
    <property type="entry name" value="ADENYLOSUCCINATE SYNTHETASE"/>
    <property type="match status" value="1"/>
</dbReference>
<dbReference type="PANTHER" id="PTHR11846:SF0">
    <property type="entry name" value="ADENYLOSUCCINATE SYNTHETASE"/>
    <property type="match status" value="1"/>
</dbReference>
<dbReference type="Pfam" id="PF00709">
    <property type="entry name" value="Adenylsucc_synt"/>
    <property type="match status" value="1"/>
</dbReference>
<dbReference type="SMART" id="SM00788">
    <property type="entry name" value="Adenylsucc_synt"/>
    <property type="match status" value="1"/>
</dbReference>
<dbReference type="SUPFAM" id="SSF52540">
    <property type="entry name" value="P-loop containing nucleoside triphosphate hydrolases"/>
    <property type="match status" value="1"/>
</dbReference>
<dbReference type="PROSITE" id="PS01266">
    <property type="entry name" value="ADENYLOSUCCIN_SYN_1"/>
    <property type="match status" value="1"/>
</dbReference>
<dbReference type="PROSITE" id="PS00513">
    <property type="entry name" value="ADENYLOSUCCIN_SYN_2"/>
    <property type="match status" value="1"/>
</dbReference>
<organism>
    <name type="scientific">Anaeromyxobacter sp. (strain K)</name>
    <dbReference type="NCBI Taxonomy" id="447217"/>
    <lineage>
        <taxon>Bacteria</taxon>
        <taxon>Pseudomonadati</taxon>
        <taxon>Myxococcota</taxon>
        <taxon>Myxococcia</taxon>
        <taxon>Myxococcales</taxon>
        <taxon>Cystobacterineae</taxon>
        <taxon>Anaeromyxobacteraceae</taxon>
        <taxon>Anaeromyxobacter</taxon>
    </lineage>
</organism>
<reference key="1">
    <citation type="submission" date="2008-08" db="EMBL/GenBank/DDBJ databases">
        <title>Complete sequence of Anaeromyxobacter sp. K.</title>
        <authorList>
            <consortium name="US DOE Joint Genome Institute"/>
            <person name="Lucas S."/>
            <person name="Copeland A."/>
            <person name="Lapidus A."/>
            <person name="Glavina del Rio T."/>
            <person name="Dalin E."/>
            <person name="Tice H."/>
            <person name="Bruce D."/>
            <person name="Goodwin L."/>
            <person name="Pitluck S."/>
            <person name="Saunders E."/>
            <person name="Brettin T."/>
            <person name="Detter J.C."/>
            <person name="Han C."/>
            <person name="Larimer F."/>
            <person name="Land M."/>
            <person name="Hauser L."/>
            <person name="Kyrpides N."/>
            <person name="Ovchinnikiva G."/>
            <person name="Beliaev A."/>
        </authorList>
    </citation>
    <scope>NUCLEOTIDE SEQUENCE [LARGE SCALE GENOMIC DNA]</scope>
    <source>
        <strain>K</strain>
    </source>
</reference>
<name>PURA_ANASK</name>
<accession>B4UGW9</accession>
<proteinExistence type="inferred from homology"/>
<gene>
    <name evidence="1" type="primary">purA</name>
    <name type="ordered locus">AnaeK_2598</name>
</gene>
<sequence>MPNVVVVGAQWGDEGKGKIVDLLTQYADVVVRFQGGNNAGHTLVVGGEKTVLHLIPSGILHPGKSCVIGNGVVIDPEVLVLEIDRLKAKGALKDDGQLVVSLDAHVIMPWHKAIDVAREQAMGEGKIGTTGRGIGPTYEDKVARRGLRIRDLLDEARLARKVKERAALAREELARLGAKLELDEPALVKRYAELGRRVSGYATDVSIWLHRALQQGKSLLFEGAQGTMLDVDHGTYPFVTSSNTVAGNAVVGCGLGPTAVDYVLGISKAYSTRVGGGPYPTELKDETGERLRKLGGEYGATTGRPRRTGWLDALALRYAVRVNGLSGIAMTKLDVLTGFDTVKIAVGYRLDGKVLDEMPSDPEVIERCTPVYEELPGWTEKLEHLRTWDDLPPRARAYVKRVEELAGVKVVGCSVGADRGETILVENPFLAR</sequence>
<feature type="chain" id="PRO_1000089267" description="Adenylosuccinate synthetase">
    <location>
        <begin position="1"/>
        <end position="432"/>
    </location>
</feature>
<feature type="active site" description="Proton acceptor" evidence="1">
    <location>
        <position position="13"/>
    </location>
</feature>
<feature type="active site" description="Proton donor" evidence="1">
    <location>
        <position position="41"/>
    </location>
</feature>
<feature type="binding site" evidence="1">
    <location>
        <begin position="12"/>
        <end position="18"/>
    </location>
    <ligand>
        <name>GTP</name>
        <dbReference type="ChEBI" id="CHEBI:37565"/>
    </ligand>
</feature>
<feature type="binding site" description="in other chain" evidence="1">
    <location>
        <begin position="13"/>
        <end position="16"/>
    </location>
    <ligand>
        <name>IMP</name>
        <dbReference type="ChEBI" id="CHEBI:58053"/>
        <note>ligand shared between dimeric partners</note>
    </ligand>
</feature>
<feature type="binding site" evidence="1">
    <location>
        <position position="13"/>
    </location>
    <ligand>
        <name>Mg(2+)</name>
        <dbReference type="ChEBI" id="CHEBI:18420"/>
    </ligand>
</feature>
<feature type="binding site" description="in other chain" evidence="1">
    <location>
        <begin position="38"/>
        <end position="41"/>
    </location>
    <ligand>
        <name>IMP</name>
        <dbReference type="ChEBI" id="CHEBI:58053"/>
        <note>ligand shared between dimeric partners</note>
    </ligand>
</feature>
<feature type="binding site" evidence="1">
    <location>
        <begin position="40"/>
        <end position="42"/>
    </location>
    <ligand>
        <name>GTP</name>
        <dbReference type="ChEBI" id="CHEBI:37565"/>
    </ligand>
</feature>
<feature type="binding site" evidence="1">
    <location>
        <position position="40"/>
    </location>
    <ligand>
        <name>Mg(2+)</name>
        <dbReference type="ChEBI" id="CHEBI:18420"/>
    </ligand>
</feature>
<feature type="binding site" description="in other chain" evidence="1">
    <location>
        <position position="130"/>
    </location>
    <ligand>
        <name>IMP</name>
        <dbReference type="ChEBI" id="CHEBI:58053"/>
        <note>ligand shared between dimeric partners</note>
    </ligand>
</feature>
<feature type="binding site" evidence="1">
    <location>
        <position position="144"/>
    </location>
    <ligand>
        <name>IMP</name>
        <dbReference type="ChEBI" id="CHEBI:58053"/>
        <note>ligand shared between dimeric partners</note>
    </ligand>
</feature>
<feature type="binding site" description="in other chain" evidence="1">
    <location>
        <position position="225"/>
    </location>
    <ligand>
        <name>IMP</name>
        <dbReference type="ChEBI" id="CHEBI:58053"/>
        <note>ligand shared between dimeric partners</note>
    </ligand>
</feature>
<feature type="binding site" description="in other chain" evidence="1">
    <location>
        <position position="240"/>
    </location>
    <ligand>
        <name>IMP</name>
        <dbReference type="ChEBI" id="CHEBI:58053"/>
        <note>ligand shared between dimeric partners</note>
    </ligand>
</feature>
<feature type="binding site" evidence="1">
    <location>
        <begin position="300"/>
        <end position="306"/>
    </location>
    <ligand>
        <name>substrate</name>
    </ligand>
</feature>
<feature type="binding site" description="in other chain" evidence="1">
    <location>
        <position position="304"/>
    </location>
    <ligand>
        <name>IMP</name>
        <dbReference type="ChEBI" id="CHEBI:58053"/>
        <note>ligand shared between dimeric partners</note>
    </ligand>
</feature>
<feature type="binding site" evidence="1">
    <location>
        <position position="306"/>
    </location>
    <ligand>
        <name>GTP</name>
        <dbReference type="ChEBI" id="CHEBI:37565"/>
    </ligand>
</feature>
<feature type="binding site" evidence="1">
    <location>
        <begin position="332"/>
        <end position="334"/>
    </location>
    <ligand>
        <name>GTP</name>
        <dbReference type="ChEBI" id="CHEBI:37565"/>
    </ligand>
</feature>
<feature type="binding site" evidence="1">
    <location>
        <begin position="414"/>
        <end position="416"/>
    </location>
    <ligand>
        <name>GTP</name>
        <dbReference type="ChEBI" id="CHEBI:37565"/>
    </ligand>
</feature>